<keyword id="KW-0007">Acetylation</keyword>
<keyword id="KW-0025">Alternative splicing</keyword>
<keyword id="KW-0175">Coiled coil</keyword>
<keyword id="KW-0963">Cytoplasm</keyword>
<keyword id="KW-1267">Proteomics identification</keyword>
<keyword id="KW-1185">Reference proteome</keyword>
<name>CRLF3_HUMAN</name>
<accession>Q8IUI8</accession>
<accession>A6NJF3</accession>
<accession>B2R8C3</accession>
<accession>Q2MLY7</accession>
<accession>Q9UNI3</accession>
<accession>Q9Y6M8</accession>
<evidence type="ECO:0000255" key="1"/>
<evidence type="ECO:0000255" key="2">
    <source>
        <dbReference type="PROSITE-ProRule" id="PRU00316"/>
    </source>
</evidence>
<evidence type="ECO:0000269" key="3">
    <source>
    </source>
</evidence>
<evidence type="ECO:0000269" key="4">
    <source>
    </source>
</evidence>
<evidence type="ECO:0000303" key="5">
    <source>
    </source>
</evidence>
<evidence type="ECO:0000303" key="6">
    <source ref="3"/>
</evidence>
<evidence type="ECO:0000305" key="7"/>
<evidence type="ECO:0007744" key="8">
    <source>
    </source>
</evidence>
<protein>
    <recommendedName>
        <fullName>Cytokine receptor-like factor 3</fullName>
    </recommendedName>
    <alternativeName>
        <fullName>Cytokine receptor-like molecule 9</fullName>
        <shortName>CREME-9</shortName>
    </alternativeName>
    <alternativeName>
        <fullName>Cytokine receptor-related protein 4</fullName>
    </alternativeName>
    <alternativeName>
        <fullName>Type I cytokine receptor-like factor p48</fullName>
    </alternativeName>
</protein>
<dbReference type="EMBL" id="DQ298450">
    <property type="protein sequence ID" value="ABC55264.1"/>
    <property type="molecule type" value="mRNA"/>
</dbReference>
<dbReference type="EMBL" id="AF046059">
    <property type="protein sequence ID" value="AAD02422.1"/>
    <property type="molecule type" value="mRNA"/>
</dbReference>
<dbReference type="EMBL" id="AF120151">
    <property type="protein sequence ID" value="AAD31758.1"/>
    <property type="molecule type" value="mRNA"/>
</dbReference>
<dbReference type="EMBL" id="AK313315">
    <property type="protein sequence ID" value="BAG36120.1"/>
    <property type="molecule type" value="mRNA"/>
</dbReference>
<dbReference type="EMBL" id="AC127024">
    <property type="status" value="NOT_ANNOTATED_CDS"/>
    <property type="molecule type" value="Genomic_DNA"/>
</dbReference>
<dbReference type="EMBL" id="BC023567">
    <property type="protein sequence ID" value="AAH23567.2"/>
    <property type="molecule type" value="mRNA"/>
</dbReference>
<dbReference type="CCDS" id="CCDS32607.1">
    <molecule id="Q8IUI8-1"/>
</dbReference>
<dbReference type="RefSeq" id="NP_057070.3">
    <molecule id="Q8IUI8-1"/>
    <property type="nucleotide sequence ID" value="NM_015986.3"/>
</dbReference>
<dbReference type="SMR" id="Q8IUI8"/>
<dbReference type="BioGRID" id="119511">
    <property type="interactions" value="39"/>
</dbReference>
<dbReference type="FunCoup" id="Q8IUI8">
    <property type="interactions" value="2847"/>
</dbReference>
<dbReference type="IntAct" id="Q8IUI8">
    <property type="interactions" value="50"/>
</dbReference>
<dbReference type="MINT" id="Q8IUI8"/>
<dbReference type="STRING" id="9606.ENSP00000318804"/>
<dbReference type="CarbonylDB" id="Q8IUI8"/>
<dbReference type="GlyCosmos" id="Q8IUI8">
    <property type="glycosylation" value="1 site, 1 glycan"/>
</dbReference>
<dbReference type="GlyGen" id="Q8IUI8">
    <property type="glycosylation" value="2 sites, 1 N-linked glycan (1 site), 1 O-linked glycan (1 site)"/>
</dbReference>
<dbReference type="iPTMnet" id="Q8IUI8"/>
<dbReference type="MetOSite" id="Q8IUI8"/>
<dbReference type="PhosphoSitePlus" id="Q8IUI8"/>
<dbReference type="BioMuta" id="CRLF3"/>
<dbReference type="DMDM" id="74762472"/>
<dbReference type="OGP" id="Q9Y6M8"/>
<dbReference type="jPOST" id="Q8IUI8"/>
<dbReference type="MassIVE" id="Q8IUI8"/>
<dbReference type="PaxDb" id="9606-ENSP00000318804"/>
<dbReference type="PeptideAtlas" id="Q8IUI8"/>
<dbReference type="ProteomicsDB" id="70577">
    <molecule id="Q8IUI8-1"/>
</dbReference>
<dbReference type="Pumba" id="Q8IUI8"/>
<dbReference type="Antibodypedia" id="1925">
    <property type="antibodies" value="135 antibodies from 23 providers"/>
</dbReference>
<dbReference type="DNASU" id="51379"/>
<dbReference type="Ensembl" id="ENST00000324238.7">
    <molecule id="Q8IUI8-1"/>
    <property type="protein sequence ID" value="ENSP00000318804.6"/>
    <property type="gene ID" value="ENSG00000176390.12"/>
</dbReference>
<dbReference type="GeneID" id="51379"/>
<dbReference type="KEGG" id="hsa:51379"/>
<dbReference type="MANE-Select" id="ENST00000324238.7">
    <property type="protein sequence ID" value="ENSP00000318804.6"/>
    <property type="RefSeq nucleotide sequence ID" value="NM_015986.4"/>
    <property type="RefSeq protein sequence ID" value="NP_057070.3"/>
</dbReference>
<dbReference type="UCSC" id="uc002hfr.5">
    <molecule id="Q8IUI8-1"/>
    <property type="organism name" value="human"/>
</dbReference>
<dbReference type="AGR" id="HGNC:17177"/>
<dbReference type="CTD" id="51379"/>
<dbReference type="DisGeNET" id="51379"/>
<dbReference type="GeneCards" id="CRLF3"/>
<dbReference type="HGNC" id="HGNC:17177">
    <property type="gene designation" value="CRLF3"/>
</dbReference>
<dbReference type="HPA" id="ENSG00000176390">
    <property type="expression patterns" value="Tissue enhanced (lymphoid)"/>
</dbReference>
<dbReference type="MIM" id="614853">
    <property type="type" value="gene"/>
</dbReference>
<dbReference type="neXtProt" id="NX_Q8IUI8"/>
<dbReference type="OpenTargets" id="ENSG00000176390"/>
<dbReference type="PharmGKB" id="PA26884"/>
<dbReference type="VEuPathDB" id="HostDB:ENSG00000176390"/>
<dbReference type="eggNOG" id="ENOG502QQI2">
    <property type="taxonomic scope" value="Eukaryota"/>
</dbReference>
<dbReference type="GeneTree" id="ENSGT00940000153469"/>
<dbReference type="HOGENOM" id="CLU_057983_0_0_1"/>
<dbReference type="InParanoid" id="Q8IUI8"/>
<dbReference type="OMA" id="HEWTPGF"/>
<dbReference type="OrthoDB" id="9984427at2759"/>
<dbReference type="PAN-GO" id="Q8IUI8">
    <property type="GO annotations" value="2 GO annotations based on evolutionary models"/>
</dbReference>
<dbReference type="PhylomeDB" id="Q8IUI8"/>
<dbReference type="TreeFam" id="TF328682"/>
<dbReference type="PathwayCommons" id="Q8IUI8"/>
<dbReference type="SignaLink" id="Q8IUI8"/>
<dbReference type="BioGRID-ORCS" id="51379">
    <property type="hits" value="19 hits in 1168 CRISPR screens"/>
</dbReference>
<dbReference type="ChiTaRS" id="CRLF3">
    <property type="organism name" value="human"/>
</dbReference>
<dbReference type="GeneWiki" id="CRLF3"/>
<dbReference type="GenomeRNAi" id="51379"/>
<dbReference type="Pharos" id="Q8IUI8">
    <property type="development level" value="Tbio"/>
</dbReference>
<dbReference type="PRO" id="PR:Q8IUI8"/>
<dbReference type="Proteomes" id="UP000005640">
    <property type="component" value="Chromosome 17"/>
</dbReference>
<dbReference type="RNAct" id="Q8IUI8">
    <property type="molecule type" value="protein"/>
</dbReference>
<dbReference type="Bgee" id="ENSG00000176390">
    <property type="expression patterns" value="Expressed in trabecular bone tissue and 210 other cell types or tissues"/>
</dbReference>
<dbReference type="ExpressionAtlas" id="Q8IUI8">
    <property type="expression patterns" value="baseline and differential"/>
</dbReference>
<dbReference type="GO" id="GO:0005737">
    <property type="term" value="C:cytoplasm"/>
    <property type="evidence" value="ECO:0000314"/>
    <property type="project" value="UniProtKB"/>
</dbReference>
<dbReference type="GO" id="GO:0005829">
    <property type="term" value="C:cytosol"/>
    <property type="evidence" value="ECO:0000314"/>
    <property type="project" value="HPA"/>
</dbReference>
<dbReference type="GO" id="GO:0005634">
    <property type="term" value="C:nucleus"/>
    <property type="evidence" value="ECO:0000318"/>
    <property type="project" value="GO_Central"/>
</dbReference>
<dbReference type="GO" id="GO:0005886">
    <property type="term" value="C:plasma membrane"/>
    <property type="evidence" value="ECO:0000314"/>
    <property type="project" value="HPA"/>
</dbReference>
<dbReference type="GO" id="GO:0003677">
    <property type="term" value="F:DNA binding"/>
    <property type="evidence" value="ECO:0000318"/>
    <property type="project" value="GO_Central"/>
</dbReference>
<dbReference type="GO" id="GO:0042802">
    <property type="term" value="F:identical protein binding"/>
    <property type="evidence" value="ECO:0000353"/>
    <property type="project" value="IntAct"/>
</dbReference>
<dbReference type="GO" id="GO:0030308">
    <property type="term" value="P:negative regulation of cell growth"/>
    <property type="evidence" value="ECO:0000314"/>
    <property type="project" value="UniProtKB"/>
</dbReference>
<dbReference type="GO" id="GO:2000134">
    <property type="term" value="P:negative regulation of G1/S transition of mitotic cell cycle"/>
    <property type="evidence" value="ECO:0000315"/>
    <property type="project" value="UniProtKB"/>
</dbReference>
<dbReference type="GO" id="GO:0045893">
    <property type="term" value="P:positive regulation of DNA-templated transcription"/>
    <property type="evidence" value="ECO:0000314"/>
    <property type="project" value="UniProtKB"/>
</dbReference>
<dbReference type="GO" id="GO:0046427">
    <property type="term" value="P:positive regulation of receptor signaling pathway via JAK-STAT"/>
    <property type="evidence" value="ECO:0000314"/>
    <property type="project" value="UniProtKB"/>
</dbReference>
<dbReference type="GO" id="GO:0045944">
    <property type="term" value="P:positive regulation of transcription by RNA polymerase II"/>
    <property type="evidence" value="ECO:0000314"/>
    <property type="project" value="UniProtKB"/>
</dbReference>
<dbReference type="CDD" id="cd00063">
    <property type="entry name" value="FN3"/>
    <property type="match status" value="1"/>
</dbReference>
<dbReference type="FunFam" id="2.60.40.10:FF:000573">
    <property type="entry name" value="Cytokine receptor-like factor 3"/>
    <property type="match status" value="1"/>
</dbReference>
<dbReference type="Gene3D" id="2.60.40.10">
    <property type="entry name" value="Immunoglobulins"/>
    <property type="match status" value="1"/>
</dbReference>
<dbReference type="InterPro" id="IPR003961">
    <property type="entry name" value="FN3_dom"/>
</dbReference>
<dbReference type="InterPro" id="IPR036116">
    <property type="entry name" value="FN3_sf"/>
</dbReference>
<dbReference type="InterPro" id="IPR013783">
    <property type="entry name" value="Ig-like_fold"/>
</dbReference>
<dbReference type="SUPFAM" id="SSF49265">
    <property type="entry name" value="Fibronectin type III"/>
    <property type="match status" value="1"/>
</dbReference>
<dbReference type="PROSITE" id="PS50853">
    <property type="entry name" value="FN3"/>
    <property type="match status" value="1"/>
</dbReference>
<proteinExistence type="evidence at protein level"/>
<organism>
    <name type="scientific">Homo sapiens</name>
    <name type="common">Human</name>
    <dbReference type="NCBI Taxonomy" id="9606"/>
    <lineage>
        <taxon>Eukaryota</taxon>
        <taxon>Metazoa</taxon>
        <taxon>Chordata</taxon>
        <taxon>Craniata</taxon>
        <taxon>Vertebrata</taxon>
        <taxon>Euteleostomi</taxon>
        <taxon>Mammalia</taxon>
        <taxon>Eutheria</taxon>
        <taxon>Euarchontoglires</taxon>
        <taxon>Primates</taxon>
        <taxon>Haplorrhini</taxon>
        <taxon>Catarrhini</taxon>
        <taxon>Hominidae</taxon>
        <taxon>Homo</taxon>
    </lineage>
</organism>
<reference key="1">
    <citation type="journal article" date="2009" name="Int. J. Biochem. Cell Biol.">
        <title>Cloning and characterization of a novel intracellular protein p48.2 that negatively regulates cell cycle progression.</title>
        <authorList>
            <person name="Yang F."/>
            <person name="Xu Y.P."/>
            <person name="Li J."/>
            <person name="Duan S.S."/>
            <person name="Fu Y.J."/>
            <person name="Zhang Y."/>
            <person name="Zhao Y."/>
            <person name="Qiao W.T."/>
            <person name="Chen Q.M."/>
            <person name="Geng Y.Q."/>
            <person name="Che C.Y."/>
            <person name="Cao Y.L."/>
            <person name="Wang Y."/>
            <person name="Zhang L."/>
            <person name="Long L."/>
            <person name="He J."/>
            <person name="Cui Q.C."/>
            <person name="Chen S.C."/>
            <person name="Wang S.H."/>
            <person name="Liu L."/>
        </authorList>
    </citation>
    <scope>NUCLEOTIDE SEQUENCE [MRNA] (ISOFORM 2)</scope>
    <scope>ALTERNATIVE SPLICING</scope>
    <scope>FUNCTION</scope>
    <scope>SUBCELLULAR LOCATION</scope>
    <scope>TISSUE SPECIFICITY</scope>
    <source>
        <tissue>Erythroleukemia</tissue>
    </source>
</reference>
<reference key="2">
    <citation type="submission" date="1999-01" db="EMBL/GenBank/DDBJ databases">
        <title>An extended gap penalty scheme for profiles results in the discovery of a novel cytokine receptor related transcript in an EST database.</title>
        <authorList>
            <person name="Farrah T."/>
            <person name="Adams R."/>
            <person name="Kho C.-J."/>
            <person name="Yamagiwa T.M."/>
            <person name="Madden K.L."/>
            <person name="Whitmore T."/>
            <person name="Jelmberg A."/>
            <person name="Pownder T."/>
            <person name="Lofton-Day C.E."/>
            <person name="Lok S."/>
        </authorList>
    </citation>
    <scope>NUCLEOTIDE SEQUENCE [MRNA] (ISOFORM 1)</scope>
</reference>
<reference key="3">
    <citation type="submission" date="1999-01" db="EMBL/GenBank/DDBJ databases">
        <title>Cloning of a novel cytokine receptor-like molecule.</title>
        <authorList>
            <person name="Maeda M."/>
            <person name="Nomura H."/>
        </authorList>
    </citation>
    <scope>NUCLEOTIDE SEQUENCE [MRNA] (ISOFORM 2)</scope>
    <source>
        <tissue>Liver</tissue>
    </source>
</reference>
<reference key="4">
    <citation type="journal article" date="2004" name="Nat. Genet.">
        <title>Complete sequencing and characterization of 21,243 full-length human cDNAs.</title>
        <authorList>
            <person name="Ota T."/>
            <person name="Suzuki Y."/>
            <person name="Nishikawa T."/>
            <person name="Otsuki T."/>
            <person name="Sugiyama T."/>
            <person name="Irie R."/>
            <person name="Wakamatsu A."/>
            <person name="Hayashi K."/>
            <person name="Sato H."/>
            <person name="Nagai K."/>
            <person name="Kimura K."/>
            <person name="Makita H."/>
            <person name="Sekine M."/>
            <person name="Obayashi M."/>
            <person name="Nishi T."/>
            <person name="Shibahara T."/>
            <person name="Tanaka T."/>
            <person name="Ishii S."/>
            <person name="Yamamoto J."/>
            <person name="Saito K."/>
            <person name="Kawai Y."/>
            <person name="Isono Y."/>
            <person name="Nakamura Y."/>
            <person name="Nagahari K."/>
            <person name="Murakami K."/>
            <person name="Yasuda T."/>
            <person name="Iwayanagi T."/>
            <person name="Wagatsuma M."/>
            <person name="Shiratori A."/>
            <person name="Sudo H."/>
            <person name="Hosoiri T."/>
            <person name="Kaku Y."/>
            <person name="Kodaira H."/>
            <person name="Kondo H."/>
            <person name="Sugawara M."/>
            <person name="Takahashi M."/>
            <person name="Kanda K."/>
            <person name="Yokoi T."/>
            <person name="Furuya T."/>
            <person name="Kikkawa E."/>
            <person name="Omura Y."/>
            <person name="Abe K."/>
            <person name="Kamihara K."/>
            <person name="Katsuta N."/>
            <person name="Sato K."/>
            <person name="Tanikawa M."/>
            <person name="Yamazaki M."/>
            <person name="Ninomiya K."/>
            <person name="Ishibashi T."/>
            <person name="Yamashita H."/>
            <person name="Murakawa K."/>
            <person name="Fujimori K."/>
            <person name="Tanai H."/>
            <person name="Kimata M."/>
            <person name="Watanabe M."/>
            <person name="Hiraoka S."/>
            <person name="Chiba Y."/>
            <person name="Ishida S."/>
            <person name="Ono Y."/>
            <person name="Takiguchi S."/>
            <person name="Watanabe S."/>
            <person name="Yosida M."/>
            <person name="Hotuta T."/>
            <person name="Kusano J."/>
            <person name="Kanehori K."/>
            <person name="Takahashi-Fujii A."/>
            <person name="Hara H."/>
            <person name="Tanase T.-O."/>
            <person name="Nomura Y."/>
            <person name="Togiya S."/>
            <person name="Komai F."/>
            <person name="Hara R."/>
            <person name="Takeuchi K."/>
            <person name="Arita M."/>
            <person name="Imose N."/>
            <person name="Musashino K."/>
            <person name="Yuuki H."/>
            <person name="Oshima A."/>
            <person name="Sasaki N."/>
            <person name="Aotsuka S."/>
            <person name="Yoshikawa Y."/>
            <person name="Matsunawa H."/>
            <person name="Ichihara T."/>
            <person name="Shiohata N."/>
            <person name="Sano S."/>
            <person name="Moriya S."/>
            <person name="Momiyama H."/>
            <person name="Satoh N."/>
            <person name="Takami S."/>
            <person name="Terashima Y."/>
            <person name="Suzuki O."/>
            <person name="Nakagawa S."/>
            <person name="Senoh A."/>
            <person name="Mizoguchi H."/>
            <person name="Goto Y."/>
            <person name="Shimizu F."/>
            <person name="Wakebe H."/>
            <person name="Hishigaki H."/>
            <person name="Watanabe T."/>
            <person name="Sugiyama A."/>
            <person name="Takemoto M."/>
            <person name="Kawakami B."/>
            <person name="Yamazaki M."/>
            <person name="Watanabe K."/>
            <person name="Kumagai A."/>
            <person name="Itakura S."/>
            <person name="Fukuzumi Y."/>
            <person name="Fujimori Y."/>
            <person name="Komiyama M."/>
            <person name="Tashiro H."/>
            <person name="Tanigami A."/>
            <person name="Fujiwara T."/>
            <person name="Ono T."/>
            <person name="Yamada K."/>
            <person name="Fujii Y."/>
            <person name="Ozaki K."/>
            <person name="Hirao M."/>
            <person name="Ohmori Y."/>
            <person name="Kawabata A."/>
            <person name="Hikiji T."/>
            <person name="Kobatake N."/>
            <person name="Inagaki H."/>
            <person name="Ikema Y."/>
            <person name="Okamoto S."/>
            <person name="Okitani R."/>
            <person name="Kawakami T."/>
            <person name="Noguchi S."/>
            <person name="Itoh T."/>
            <person name="Shigeta K."/>
            <person name="Senba T."/>
            <person name="Matsumura K."/>
            <person name="Nakajima Y."/>
            <person name="Mizuno T."/>
            <person name="Morinaga M."/>
            <person name="Sasaki M."/>
            <person name="Togashi T."/>
            <person name="Oyama M."/>
            <person name="Hata H."/>
            <person name="Watanabe M."/>
            <person name="Komatsu T."/>
            <person name="Mizushima-Sugano J."/>
            <person name="Satoh T."/>
            <person name="Shirai Y."/>
            <person name="Takahashi Y."/>
            <person name="Nakagawa K."/>
            <person name="Okumura K."/>
            <person name="Nagase T."/>
            <person name="Nomura N."/>
            <person name="Kikuchi H."/>
            <person name="Masuho Y."/>
            <person name="Yamashita R."/>
            <person name="Nakai K."/>
            <person name="Yada T."/>
            <person name="Nakamura Y."/>
            <person name="Ohara O."/>
            <person name="Isogai T."/>
            <person name="Sugano S."/>
        </authorList>
    </citation>
    <scope>NUCLEOTIDE SEQUENCE [LARGE SCALE MRNA] (ISOFORM 1)</scope>
    <source>
        <tissue>Synovial cell</tissue>
    </source>
</reference>
<reference key="5">
    <citation type="journal article" date="2006" name="Nature">
        <title>DNA sequence of human chromosome 17 and analysis of rearrangement in the human lineage.</title>
        <authorList>
            <person name="Zody M.C."/>
            <person name="Garber M."/>
            <person name="Adams D.J."/>
            <person name="Sharpe T."/>
            <person name="Harrow J."/>
            <person name="Lupski J.R."/>
            <person name="Nicholson C."/>
            <person name="Searle S.M."/>
            <person name="Wilming L."/>
            <person name="Young S.K."/>
            <person name="Abouelleil A."/>
            <person name="Allen N.R."/>
            <person name="Bi W."/>
            <person name="Bloom T."/>
            <person name="Borowsky M.L."/>
            <person name="Bugalter B.E."/>
            <person name="Butler J."/>
            <person name="Chang J.L."/>
            <person name="Chen C.-K."/>
            <person name="Cook A."/>
            <person name="Corum B."/>
            <person name="Cuomo C.A."/>
            <person name="de Jong P.J."/>
            <person name="DeCaprio D."/>
            <person name="Dewar K."/>
            <person name="FitzGerald M."/>
            <person name="Gilbert J."/>
            <person name="Gibson R."/>
            <person name="Gnerre S."/>
            <person name="Goldstein S."/>
            <person name="Grafham D.V."/>
            <person name="Grocock R."/>
            <person name="Hafez N."/>
            <person name="Hagopian D.S."/>
            <person name="Hart E."/>
            <person name="Norman C.H."/>
            <person name="Humphray S."/>
            <person name="Jaffe D.B."/>
            <person name="Jones M."/>
            <person name="Kamal M."/>
            <person name="Khodiyar V.K."/>
            <person name="LaButti K."/>
            <person name="Laird G."/>
            <person name="Lehoczky J."/>
            <person name="Liu X."/>
            <person name="Lokyitsang T."/>
            <person name="Loveland J."/>
            <person name="Lui A."/>
            <person name="Macdonald P."/>
            <person name="Major J.E."/>
            <person name="Matthews L."/>
            <person name="Mauceli E."/>
            <person name="McCarroll S.A."/>
            <person name="Mihalev A.H."/>
            <person name="Mudge J."/>
            <person name="Nguyen C."/>
            <person name="Nicol R."/>
            <person name="O'Leary S.B."/>
            <person name="Osoegawa K."/>
            <person name="Schwartz D.C."/>
            <person name="Shaw-Smith C."/>
            <person name="Stankiewicz P."/>
            <person name="Steward C."/>
            <person name="Swarbreck D."/>
            <person name="Venkataraman V."/>
            <person name="Whittaker C.A."/>
            <person name="Yang X."/>
            <person name="Zimmer A.R."/>
            <person name="Bradley A."/>
            <person name="Hubbard T."/>
            <person name="Birren B.W."/>
            <person name="Rogers J."/>
            <person name="Lander E.S."/>
            <person name="Nusbaum C."/>
        </authorList>
    </citation>
    <scope>NUCLEOTIDE SEQUENCE [LARGE SCALE GENOMIC DNA]</scope>
</reference>
<reference key="6">
    <citation type="journal article" date="2004" name="Genome Res.">
        <title>The status, quality, and expansion of the NIH full-length cDNA project: the Mammalian Gene Collection (MGC).</title>
        <authorList>
            <consortium name="The MGC Project Team"/>
        </authorList>
    </citation>
    <scope>NUCLEOTIDE SEQUENCE [LARGE SCALE MRNA] (ISOFORM 1)</scope>
    <source>
        <tissue>B-cell</tissue>
    </source>
</reference>
<reference key="7">
    <citation type="journal article" date="2006" name="Oncol. Rep.">
        <title>Identification of dysregulated genes in cutaneous squamous cell carcinoma.</title>
        <authorList>
            <person name="Dang C."/>
            <person name="Gottschling M."/>
            <person name="Manning K."/>
            <person name="O'Currain E."/>
            <person name="Schneider S."/>
            <person name="Sterry W."/>
            <person name="Stockfleth E."/>
            <person name="Nindl I."/>
        </authorList>
    </citation>
    <scope>TISSUE SPECIFICITY</scope>
</reference>
<reference key="8">
    <citation type="journal article" date="2011" name="BMC Syst. Biol.">
        <title>Initial characterization of the human central proteome.</title>
        <authorList>
            <person name="Burkard T.R."/>
            <person name="Planyavsky M."/>
            <person name="Kaupe I."/>
            <person name="Breitwieser F.P."/>
            <person name="Buerckstuemmer T."/>
            <person name="Bennett K.L."/>
            <person name="Superti-Furga G."/>
            <person name="Colinge J."/>
        </authorList>
    </citation>
    <scope>IDENTIFICATION BY MASS SPECTROMETRY [LARGE SCALE ANALYSIS]</scope>
</reference>
<reference key="9">
    <citation type="journal article" date="2012" name="Proc. Natl. Acad. Sci. U.S.A.">
        <title>N-terminal acetylome analyses and functional insights of the N-terminal acetyltransferase NatB.</title>
        <authorList>
            <person name="Van Damme P."/>
            <person name="Lasa M."/>
            <person name="Polevoda B."/>
            <person name="Gazquez C."/>
            <person name="Elosegui-Artola A."/>
            <person name="Kim D.S."/>
            <person name="De Juan-Pardo E."/>
            <person name="Demeyer K."/>
            <person name="Hole K."/>
            <person name="Larrea E."/>
            <person name="Timmerman E."/>
            <person name="Prieto J."/>
            <person name="Arnesen T."/>
            <person name="Sherman F."/>
            <person name="Gevaert K."/>
            <person name="Aldabe R."/>
        </authorList>
    </citation>
    <scope>ACETYLATION [LARGE SCALE ANALYSIS] AT MET-1 (ISOFORM 2)</scope>
    <scope>IDENTIFICATION BY MASS SPECTROMETRY [LARGE SCALE ANALYSIS]</scope>
</reference>
<comment type="function">
    <text evidence="4">May play a role in the negative regulation of cell cycle progression.</text>
</comment>
<comment type="interaction">
    <interactant intactId="EBI-2872414">
        <id>Q8IUI8</id>
    </interactant>
    <interactant intactId="EBI-930964">
        <id>P54253</id>
        <label>ATXN1</label>
    </interactant>
    <organismsDiffer>false</organismsDiffer>
    <experiments>6</experiments>
</comment>
<comment type="interaction">
    <interactant intactId="EBI-2872414">
        <id>Q8IUI8</id>
    </interactant>
    <interactant intactId="EBI-946046">
        <id>P54252</id>
        <label>ATXN3</label>
    </interactant>
    <organismsDiffer>false</organismsDiffer>
    <experiments>3</experiments>
</comment>
<comment type="interaction">
    <interactant intactId="EBI-2872414">
        <id>Q8IUI8</id>
    </interactant>
    <interactant intactId="EBI-10988864">
        <id>P46379-2</id>
        <label>BAG6</label>
    </interactant>
    <organismsDiffer>false</organismsDiffer>
    <experiments>3</experiments>
</comment>
<comment type="interaction">
    <interactant intactId="EBI-2872414">
        <id>Q8IUI8</id>
    </interactant>
    <interactant intactId="EBI-2872414">
        <id>Q8IUI8</id>
        <label>CRLF3</label>
    </interactant>
    <organismsDiffer>false</organismsDiffer>
    <experiments>4</experiments>
</comment>
<comment type="interaction">
    <interactant intactId="EBI-2872414">
        <id>Q8IUI8</id>
    </interactant>
    <interactant intactId="EBI-742054">
        <id>Q96D03</id>
        <label>DDIT4L</label>
    </interactant>
    <organismsDiffer>false</organismsDiffer>
    <experiments>3</experiments>
</comment>
<comment type="interaction">
    <interactant intactId="EBI-2872414">
        <id>Q8IUI8</id>
    </interactant>
    <interactant intactId="EBI-10976677">
        <id>G5E9A7</id>
        <label>DMWD</label>
    </interactant>
    <organismsDiffer>false</organismsDiffer>
    <experiments>3</experiments>
</comment>
<comment type="interaction">
    <interactant intactId="EBI-2872414">
        <id>Q8IUI8</id>
    </interactant>
    <interactant intactId="EBI-9641086">
        <id>P21333-2</id>
        <label>FLNA</label>
    </interactant>
    <organismsDiffer>false</organismsDiffer>
    <experiments>3</experiments>
</comment>
<comment type="interaction">
    <interactant intactId="EBI-2872414">
        <id>Q8IUI8</id>
    </interactant>
    <interactant intactId="EBI-744302">
        <id>P14136</id>
        <label>GFAP</label>
    </interactant>
    <organismsDiffer>false</organismsDiffer>
    <experiments>3</experiments>
</comment>
<comment type="interaction">
    <interactant intactId="EBI-2872414">
        <id>Q8IUI8</id>
    </interactant>
    <interactant intactId="EBI-352682">
        <id>P04792</id>
        <label>HSPB1</label>
    </interactant>
    <organismsDiffer>false</organismsDiffer>
    <experiments>3</experiments>
</comment>
<comment type="interaction">
    <interactant intactId="EBI-2872414">
        <id>Q8IUI8</id>
    </interactant>
    <interactant intactId="EBI-6398041">
        <id>Q9UMF0</id>
        <label>ICAM5</label>
    </interactant>
    <organismsDiffer>false</organismsDiffer>
    <experiments>3</experiments>
</comment>
<comment type="interaction">
    <interactant intactId="EBI-2872414">
        <id>Q8IUI8</id>
    </interactant>
    <interactant intactId="EBI-1055254">
        <id>Q8WXH2</id>
        <label>JPH3</label>
    </interactant>
    <organismsDiffer>false</organismsDiffer>
    <experiments>3</experiments>
</comment>
<comment type="interaction">
    <interactant intactId="EBI-2872414">
        <id>Q8IUI8</id>
    </interactant>
    <interactant intactId="EBI-11976683">
        <id>Q4G0X4</id>
        <label>KCTD21</label>
    </interactant>
    <organismsDiffer>false</organismsDiffer>
    <experiments>3</experiments>
</comment>
<comment type="interaction">
    <interactant intactId="EBI-2872414">
        <id>Q8IUI8</id>
    </interactant>
    <interactant intactId="EBI-10975473">
        <id>O60333-2</id>
        <label>KIF1B</label>
    </interactant>
    <organismsDiffer>false</organismsDiffer>
    <experiments>3</experiments>
</comment>
<comment type="interaction">
    <interactant intactId="EBI-2872414">
        <id>Q8IUI8</id>
    </interactant>
    <interactant intactId="EBI-948266">
        <id>O14901</id>
        <label>KLF11</label>
    </interactant>
    <organismsDiffer>false</organismsDiffer>
    <experiments>3</experiments>
</comment>
<comment type="interaction">
    <interactant intactId="EBI-2872414">
        <id>Q8IUI8</id>
    </interactant>
    <interactant intactId="EBI-11985629">
        <id>Q96JM7-2</id>
        <label>L3MBTL3</label>
    </interactant>
    <organismsDiffer>false</organismsDiffer>
    <experiments>3</experiments>
</comment>
<comment type="interaction">
    <interactant intactId="EBI-2872414">
        <id>Q8IUI8</id>
    </interactant>
    <interactant intactId="EBI-10274069">
        <id>Q8TCE9</id>
        <label>LGALS14</label>
    </interactant>
    <organismsDiffer>false</organismsDiffer>
    <experiments>6</experiments>
</comment>
<comment type="interaction">
    <interactant intactId="EBI-2872414">
        <id>Q8IUI8</id>
    </interactant>
    <interactant intactId="EBI-1050743">
        <id>P31153</id>
        <label>MAT2A</label>
    </interactant>
    <organismsDiffer>false</organismsDiffer>
    <experiments>3</experiments>
</comment>
<comment type="interaction">
    <interactant intactId="EBI-2872414">
        <id>Q8IUI8</id>
    </interactant>
    <interactant intactId="EBI-5662487">
        <id>Q8TDC0</id>
        <label>MYOZ3</label>
    </interactant>
    <organismsDiffer>false</organismsDiffer>
    <experiments>3</experiments>
</comment>
<comment type="interaction">
    <interactant intactId="EBI-2872414">
        <id>Q8IUI8</id>
    </interactant>
    <interactant intactId="EBI-713665">
        <id>P19404</id>
        <label>NDUFV2</label>
    </interactant>
    <organismsDiffer>false</organismsDiffer>
    <experiments>3</experiments>
</comment>
<comment type="interaction">
    <interactant intactId="EBI-2872414">
        <id>Q8IUI8</id>
    </interactant>
    <interactant intactId="EBI-475646">
        <id>P07196</id>
        <label>NEFL</label>
    </interactant>
    <organismsDiffer>false</organismsDiffer>
    <experiments>3</experiments>
</comment>
<comment type="interaction">
    <interactant intactId="EBI-2872414">
        <id>Q8IUI8</id>
    </interactant>
    <interactant intactId="EBI-1391623">
        <id>P29474</id>
        <label>NOS3</label>
    </interactant>
    <organismsDiffer>false</organismsDiffer>
    <experiments>3</experiments>
</comment>
<comment type="interaction">
    <interactant intactId="EBI-2872414">
        <id>Q8IUI8</id>
    </interactant>
    <interactant intactId="EBI-721853">
        <id>O14832</id>
        <label>PHYH</label>
    </interactant>
    <organismsDiffer>false</organismsDiffer>
    <experiments>3</experiments>
</comment>
<comment type="interaction">
    <interactant intactId="EBI-2872414">
        <id>Q8IUI8</id>
    </interactant>
    <interactant intactId="EBI-473160">
        <id>Q8N2W9</id>
        <label>PIAS4</label>
    </interactant>
    <organismsDiffer>false</organismsDiffer>
    <experiments>3</experiments>
</comment>
<comment type="interaction">
    <interactant intactId="EBI-2872414">
        <id>Q8IUI8</id>
    </interactant>
    <interactant intactId="EBI-50433196">
        <id>A0A6Q8PF08</id>
        <label>PMP22</label>
    </interactant>
    <organismsDiffer>false</organismsDiffer>
    <experiments>3</experiments>
</comment>
<comment type="interaction">
    <interactant intactId="EBI-2872414">
        <id>Q8IUI8</id>
    </interactant>
    <interactant intactId="EBI-749195">
        <id>P60891</id>
        <label>PRPS1</label>
    </interactant>
    <organismsDiffer>false</organismsDiffer>
    <experiments>3</experiments>
</comment>
<comment type="interaction">
    <interactant intactId="EBI-2872414">
        <id>Q8IUI8</id>
    </interactant>
    <interactant intactId="EBI-954272">
        <id>Q96PK6</id>
        <label>RBM14</label>
    </interactant>
    <organismsDiffer>false</organismsDiffer>
    <experiments>3</experiments>
</comment>
<comment type="interaction">
    <interactant intactId="EBI-2872414">
        <id>Q8IUI8</id>
    </interactant>
    <interactant intactId="EBI-985879">
        <id>P37840</id>
        <label>SNCA</label>
    </interactant>
    <organismsDiffer>false</organismsDiffer>
    <experiments>3</experiments>
</comment>
<comment type="interaction">
    <interactant intactId="EBI-2872414">
        <id>Q8IUI8</id>
    </interactant>
    <interactant intactId="EBI-372475">
        <id>P14678-2</id>
        <label>SNRPB</label>
    </interactant>
    <organismsDiffer>false</organismsDiffer>
    <experiments>3</experiments>
</comment>
<comment type="interaction">
    <interactant intactId="EBI-2872414">
        <id>Q8IUI8</id>
    </interactant>
    <interactant intactId="EBI-5235340">
        <id>Q7Z699</id>
        <label>SPRED1</label>
    </interactant>
    <organismsDiffer>false</organismsDiffer>
    <experiments>3</experiments>
</comment>
<comment type="interaction">
    <interactant intactId="EBI-2872414">
        <id>Q8IUI8</id>
    </interactant>
    <interactant intactId="EBI-372899">
        <id>Q13148</id>
        <label>TARDBP</label>
    </interactant>
    <organismsDiffer>false</organismsDiffer>
    <experiments>6</experiments>
</comment>
<comment type="interaction">
    <interactant intactId="EBI-2872414">
        <id>Q8IUI8</id>
    </interactant>
    <interactant intactId="EBI-12806590">
        <id>Q86WV8</id>
        <label>TSC1</label>
    </interactant>
    <organismsDiffer>false</organismsDiffer>
    <experiments>3</experiments>
</comment>
<comment type="interaction">
    <interactant intactId="EBI-2872414">
        <id>Q8IUI8</id>
    </interactant>
    <interactant intactId="EBI-741945">
        <id>Q9BRG1</id>
        <label>VPS25</label>
    </interactant>
    <organismsDiffer>false</organismsDiffer>
    <experiments>12</experiments>
</comment>
<comment type="interaction">
    <interactant intactId="EBI-2872414">
        <id>Q8IUI8</id>
    </interactant>
    <interactant intactId="EBI-2555749">
        <id>Q6P2D0</id>
        <label>ZFP1</label>
    </interactant>
    <organismsDiffer>false</organismsDiffer>
    <experiments>3</experiments>
</comment>
<comment type="subcellular location">
    <subcellularLocation>
        <location evidence="4">Cytoplasm</location>
    </subcellularLocation>
    <text evidence="4">The EGFP- and MYC-tagged protein has been shown to be cytoplasmic.</text>
</comment>
<comment type="alternative products">
    <event type="alternative splicing"/>
    <isoform>
        <id>Q8IUI8-1</id>
        <name>1</name>
        <name>p48.6</name>
        <sequence type="displayed"/>
    </isoform>
    <isoform>
        <id>Q8IUI8-2</id>
        <name>2</name>
        <name>p48.2</name>
        <sequence type="described" ref="VSP_044648"/>
    </isoform>
</comment>
<comment type="tissue specificity">
    <text evidence="3 4">Expressed in several embryonic and adult tissues, including adult and fetal brain, liver, spleen and pancreas. Expressed in adult, but not fetal kidney. Expressed in skin and squamous cell carcinoma (SCC) and in several other cancer types. Also detected in lesion actinic keratosis (AK).</text>
</comment>
<comment type="similarity">
    <text evidence="7">Belongs to the cytokine receptor-like factor 3 family.</text>
</comment>
<sequence>MRGAMELEPELLLQEARENVEAAQSYRRELGHRLEGLREARRQIKESASQTRDVLKQHFNDLKGTLGKLLDERLVTLLQEVDTIEQETIKPLDDCQKLIEHGVNTAEDLVREGEIAMLGGVGEENEKLWSFTKKASHIQLDSLPEVPLLVDVPCLSAQLDDSILNIVKDHIFKHGTVASRPPVQIEELIEKPGGIIVRWCKVDDDFTAQDYRLQFRKCTSNHFEDVYVGSETEFIVLHIDPNVDYQFRVCARGDGRQEWSPWSVPQIGHSTLVPHEWTAGFEGYSLSSRRNIALRNDSESSGVLYSRAPTYFCGQTLTFRVETVGQPDRRDSIGVCAEKQDGYDSLQRDQAVCISTNGAVFVNGKEMTNQLPAVTSGSTVTFDIEAVTLGTTSNNEGGHFKLRVTISSNNREVVFDWLLDQSCGSLYFGCSFFYPGWKVLVF</sequence>
<gene>
    <name type="primary">CRLF3</name>
    <name type="synonym">CREME9</name>
    <name type="synonym">CRLM9</name>
    <name type="synonym">CYTOR4</name>
    <name type="synonym">P48</name>
</gene>
<feature type="chain" id="PRO_0000288936" description="Cytokine receptor-like factor 3">
    <location>
        <begin position="1"/>
        <end position="442"/>
    </location>
</feature>
<feature type="domain" description="Fibronectin type-III" evidence="2">
    <location>
        <begin position="181"/>
        <end position="274"/>
    </location>
</feature>
<feature type="coiled-coil region" evidence="1">
    <location>
        <begin position="10"/>
        <end position="57"/>
    </location>
</feature>
<feature type="splice variant" id="VSP_044648" description="In isoform 2." evidence="5 6">
    <location>
        <begin position="1"/>
        <end position="4"/>
    </location>
</feature>
<feature type="sequence variant" id="VAR_049180" description="In dbSNP:rs3764418.">
    <original>V</original>
    <variation>M</variation>
    <location>
        <position position="202"/>
    </location>
</feature>
<feature type="sequence variant" id="VAR_032539" description="In dbSNP:rs11867457.">
    <original>L</original>
    <variation>P</variation>
    <location>
        <position position="389"/>
    </location>
</feature>
<feature type="sequence conflict" description="In Ref. 2; AAD02422." evidence="7" ref="2">
    <original>R</original>
    <variation>K</variation>
    <location>
        <position position="42"/>
    </location>
</feature>
<feature type="sequence conflict" description="In Ref. 3; AAD31758." evidence="7" ref="3">
    <original>L</original>
    <variation>V</variation>
    <location>
        <position position="66"/>
    </location>
</feature>
<feature type="sequence conflict" description="In Ref. 1; ABC55264." evidence="7" ref="1">
    <original>I</original>
    <variation>L</variation>
    <location>
        <position position="189"/>
    </location>
</feature>
<feature type="modified residue" description="N-acetylmethionine" evidence="8">
    <location sequence="Q8IUI8-2">
        <position position="1"/>
    </location>
</feature>